<gene>
    <name evidence="1" type="primary">pxpA</name>
    <name type="ordered locus">CKL_2790</name>
</gene>
<protein>
    <recommendedName>
        <fullName evidence="1">5-oxoprolinase subunit A</fullName>
        <shortName evidence="1">5-OPase subunit A</shortName>
        <ecNumber evidence="1">3.5.2.9</ecNumber>
    </recommendedName>
    <alternativeName>
        <fullName evidence="1">5-oxoprolinase (ATP-hydrolyzing) subunit A</fullName>
    </alternativeName>
</protein>
<keyword id="KW-0067">ATP-binding</keyword>
<keyword id="KW-0378">Hydrolase</keyword>
<keyword id="KW-0547">Nucleotide-binding</keyword>
<keyword id="KW-1185">Reference proteome</keyword>
<comment type="function">
    <text evidence="1">Catalyzes the cleavage of 5-oxoproline to form L-glutamate coupled to the hydrolysis of ATP to ADP and inorganic phosphate.</text>
</comment>
<comment type="catalytic activity">
    <reaction evidence="1">
        <text>5-oxo-L-proline + ATP + 2 H2O = L-glutamate + ADP + phosphate + H(+)</text>
        <dbReference type="Rhea" id="RHEA:10348"/>
        <dbReference type="ChEBI" id="CHEBI:15377"/>
        <dbReference type="ChEBI" id="CHEBI:15378"/>
        <dbReference type="ChEBI" id="CHEBI:29985"/>
        <dbReference type="ChEBI" id="CHEBI:30616"/>
        <dbReference type="ChEBI" id="CHEBI:43474"/>
        <dbReference type="ChEBI" id="CHEBI:58402"/>
        <dbReference type="ChEBI" id="CHEBI:456216"/>
        <dbReference type="EC" id="3.5.2.9"/>
    </reaction>
</comment>
<comment type="subunit">
    <text evidence="1">Forms a complex composed of PxpA, PxpB and PxpC.</text>
</comment>
<comment type="similarity">
    <text evidence="1">Belongs to the LamB/PxpA family.</text>
</comment>
<dbReference type="EC" id="3.5.2.9" evidence="1"/>
<dbReference type="EMBL" id="CP000673">
    <property type="protein sequence ID" value="EDK34802.1"/>
    <property type="molecule type" value="Genomic_DNA"/>
</dbReference>
<dbReference type="RefSeq" id="WP_012103131.1">
    <property type="nucleotide sequence ID" value="NC_009706.1"/>
</dbReference>
<dbReference type="SMR" id="A5N106"/>
<dbReference type="STRING" id="431943.CKL_2790"/>
<dbReference type="KEGG" id="ckl:CKL_2790"/>
<dbReference type="eggNOG" id="COG1540">
    <property type="taxonomic scope" value="Bacteria"/>
</dbReference>
<dbReference type="HOGENOM" id="CLU_069535_0_0_9"/>
<dbReference type="Proteomes" id="UP000002411">
    <property type="component" value="Chromosome"/>
</dbReference>
<dbReference type="GO" id="GO:0017168">
    <property type="term" value="F:5-oxoprolinase (ATP-hydrolyzing) activity"/>
    <property type="evidence" value="ECO:0007669"/>
    <property type="project" value="UniProtKB-UniRule"/>
</dbReference>
<dbReference type="GO" id="GO:0005524">
    <property type="term" value="F:ATP binding"/>
    <property type="evidence" value="ECO:0007669"/>
    <property type="project" value="UniProtKB-UniRule"/>
</dbReference>
<dbReference type="GO" id="GO:0005975">
    <property type="term" value="P:carbohydrate metabolic process"/>
    <property type="evidence" value="ECO:0007669"/>
    <property type="project" value="InterPro"/>
</dbReference>
<dbReference type="CDD" id="cd10787">
    <property type="entry name" value="LamB_YcsF_like"/>
    <property type="match status" value="1"/>
</dbReference>
<dbReference type="Gene3D" id="3.20.20.370">
    <property type="entry name" value="Glycoside hydrolase/deacetylase"/>
    <property type="match status" value="1"/>
</dbReference>
<dbReference type="HAMAP" id="MF_00691">
    <property type="entry name" value="PxpA"/>
    <property type="match status" value="1"/>
</dbReference>
<dbReference type="InterPro" id="IPR011330">
    <property type="entry name" value="Glyco_hydro/deAcase_b/a-brl"/>
</dbReference>
<dbReference type="InterPro" id="IPR005501">
    <property type="entry name" value="LamB/YcsF/PxpA-like"/>
</dbReference>
<dbReference type="NCBIfam" id="NF003814">
    <property type="entry name" value="PRK05406.1-3"/>
    <property type="match status" value="1"/>
</dbReference>
<dbReference type="NCBIfam" id="NF003816">
    <property type="entry name" value="PRK05406.1-5"/>
    <property type="match status" value="1"/>
</dbReference>
<dbReference type="PANTHER" id="PTHR30292:SF0">
    <property type="entry name" value="5-OXOPROLINASE SUBUNIT A"/>
    <property type="match status" value="1"/>
</dbReference>
<dbReference type="PANTHER" id="PTHR30292">
    <property type="entry name" value="UNCHARACTERIZED PROTEIN YBGL-RELATED"/>
    <property type="match status" value="1"/>
</dbReference>
<dbReference type="Pfam" id="PF03746">
    <property type="entry name" value="LamB_YcsF"/>
    <property type="match status" value="1"/>
</dbReference>
<dbReference type="SUPFAM" id="SSF88713">
    <property type="entry name" value="Glycoside hydrolase/deacetylase"/>
    <property type="match status" value="1"/>
</dbReference>
<sequence length="255" mass="28139">MYKIDLNCDLGEGFGVYKMGNDEEILKYITSANIACGFHAGDPKIMHETVRLSLLNDVAIGAHPGLPDLAGFGRRNINVSPDEIYDMVVYQIGALYAFVKSEGGVMHHVKPHGTLYNMAAKNKKLARAIAEGVYNVNPEFILFGLSGSELISEGNRIGLRTASEVFADRTYQLDGSLTPRSAGNAAIITDIDKAAERVYRMIKYGLVMCEQKKDIGIKADTLCIHGDNPHSLIFVRKINKHLKDLGVYIEKIIHE</sequence>
<evidence type="ECO:0000255" key="1">
    <source>
        <dbReference type="HAMAP-Rule" id="MF_00691"/>
    </source>
</evidence>
<organism>
    <name type="scientific">Clostridium kluyveri (strain ATCC 8527 / DSM 555 / NBRC 12016 / NCIMB 10680 / K1)</name>
    <dbReference type="NCBI Taxonomy" id="431943"/>
    <lineage>
        <taxon>Bacteria</taxon>
        <taxon>Bacillati</taxon>
        <taxon>Bacillota</taxon>
        <taxon>Clostridia</taxon>
        <taxon>Eubacteriales</taxon>
        <taxon>Clostridiaceae</taxon>
        <taxon>Clostridium</taxon>
    </lineage>
</organism>
<reference key="1">
    <citation type="journal article" date="2008" name="Proc. Natl. Acad. Sci. U.S.A.">
        <title>The genome of Clostridium kluyveri, a strict anaerobe with unique metabolic features.</title>
        <authorList>
            <person name="Seedorf H."/>
            <person name="Fricke W.F."/>
            <person name="Veith B."/>
            <person name="Brueggemann H."/>
            <person name="Liesegang H."/>
            <person name="Strittmatter A."/>
            <person name="Miethke M."/>
            <person name="Buckel W."/>
            <person name="Hinderberger J."/>
            <person name="Li F."/>
            <person name="Hagemeier C."/>
            <person name="Thauer R.K."/>
            <person name="Gottschalk G."/>
        </authorList>
    </citation>
    <scope>NUCLEOTIDE SEQUENCE [LARGE SCALE GENOMIC DNA]</scope>
    <source>
        <strain>ATCC 8527 / DSM 555 / NBRC 12016 / NCIMB 10680 / K1</strain>
    </source>
</reference>
<proteinExistence type="inferred from homology"/>
<accession>A5N106</accession>
<feature type="chain" id="PRO_1000083118" description="5-oxoprolinase subunit A">
    <location>
        <begin position="1"/>
        <end position="255"/>
    </location>
</feature>
<name>PXPA_CLOK5</name>